<organism>
    <name type="scientific">Clostridium perfringens (strain 13 / Type A)</name>
    <dbReference type="NCBI Taxonomy" id="195102"/>
    <lineage>
        <taxon>Bacteria</taxon>
        <taxon>Bacillati</taxon>
        <taxon>Bacillota</taxon>
        <taxon>Clostridia</taxon>
        <taxon>Eubacteriales</taxon>
        <taxon>Clostridiaceae</taxon>
        <taxon>Clostridium</taxon>
    </lineage>
</organism>
<accession>Q8XJN7</accession>
<comment type="function">
    <text evidence="1">Carrier of the growing fatty acid chain in fatty acid biosynthesis.</text>
</comment>
<comment type="pathway">
    <text evidence="1">Lipid metabolism; fatty acid biosynthesis.</text>
</comment>
<comment type="subcellular location">
    <subcellularLocation>
        <location evidence="1">Cytoplasm</location>
    </subcellularLocation>
</comment>
<comment type="PTM">
    <text evidence="1">4'-phosphopantetheine is transferred from CoA to a specific serine of apo-ACP by AcpS. This modification is essential for activity because fatty acids are bound in thioester linkage to the sulfhydryl of the prosthetic group.</text>
</comment>
<comment type="similarity">
    <text evidence="1">Belongs to the acyl carrier protein (ACP) family.</text>
</comment>
<reference key="1">
    <citation type="journal article" date="2002" name="Proc. Natl. Acad. Sci. U.S.A.">
        <title>Complete genome sequence of Clostridium perfringens, an anaerobic flesh-eater.</title>
        <authorList>
            <person name="Shimizu T."/>
            <person name="Ohtani K."/>
            <person name="Hirakawa H."/>
            <person name="Ohshima K."/>
            <person name="Yamashita A."/>
            <person name="Shiba T."/>
            <person name="Ogasawara N."/>
            <person name="Hattori M."/>
            <person name="Kuhara S."/>
            <person name="Hayashi H."/>
        </authorList>
    </citation>
    <scope>NUCLEOTIDE SEQUENCE [LARGE SCALE GENOMIC DNA]</scope>
    <source>
        <strain>13 / Type A</strain>
    </source>
</reference>
<gene>
    <name evidence="1" type="primary">acpP</name>
    <name type="synonym">acpA</name>
    <name type="ordered locus">CPE1719</name>
</gene>
<evidence type="ECO:0000255" key="1">
    <source>
        <dbReference type="HAMAP-Rule" id="MF_01217"/>
    </source>
</evidence>
<evidence type="ECO:0000255" key="2">
    <source>
        <dbReference type="PROSITE-ProRule" id="PRU00258"/>
    </source>
</evidence>
<keyword id="KW-0963">Cytoplasm</keyword>
<keyword id="KW-0275">Fatty acid biosynthesis</keyword>
<keyword id="KW-0276">Fatty acid metabolism</keyword>
<keyword id="KW-0444">Lipid biosynthesis</keyword>
<keyword id="KW-0443">Lipid metabolism</keyword>
<keyword id="KW-0596">Phosphopantetheine</keyword>
<keyword id="KW-0597">Phosphoprotein</keyword>
<keyword id="KW-1185">Reference proteome</keyword>
<protein>
    <recommendedName>
        <fullName evidence="1">Acyl carrier protein</fullName>
        <shortName evidence="1">ACP</shortName>
    </recommendedName>
</protein>
<proteinExistence type="inferred from homology"/>
<feature type="chain" id="PRO_0000180131" description="Acyl carrier protein">
    <location>
        <begin position="1"/>
        <end position="76"/>
    </location>
</feature>
<feature type="domain" description="Carrier" evidence="2">
    <location>
        <begin position="1"/>
        <end position="74"/>
    </location>
</feature>
<feature type="modified residue" description="O-(pantetheine 4'-phosphoryl)serine" evidence="2">
    <location>
        <position position="34"/>
    </location>
</feature>
<name>ACP_CLOPE</name>
<dbReference type="EMBL" id="BA000016">
    <property type="protein sequence ID" value="BAB81425.1"/>
    <property type="molecule type" value="Genomic_DNA"/>
</dbReference>
<dbReference type="RefSeq" id="WP_003458423.1">
    <property type="nucleotide sequence ID" value="NC_003366.1"/>
</dbReference>
<dbReference type="SMR" id="Q8XJN7"/>
<dbReference type="STRING" id="195102.gene:10490983"/>
<dbReference type="GeneID" id="93001743"/>
<dbReference type="KEGG" id="cpe:CPE1719"/>
<dbReference type="HOGENOM" id="CLU_108696_5_1_9"/>
<dbReference type="UniPathway" id="UPA00094"/>
<dbReference type="Proteomes" id="UP000000818">
    <property type="component" value="Chromosome"/>
</dbReference>
<dbReference type="GO" id="GO:0005829">
    <property type="term" value="C:cytosol"/>
    <property type="evidence" value="ECO:0007669"/>
    <property type="project" value="TreeGrafter"/>
</dbReference>
<dbReference type="GO" id="GO:0016020">
    <property type="term" value="C:membrane"/>
    <property type="evidence" value="ECO:0007669"/>
    <property type="project" value="GOC"/>
</dbReference>
<dbReference type="GO" id="GO:0000035">
    <property type="term" value="F:acyl binding"/>
    <property type="evidence" value="ECO:0007669"/>
    <property type="project" value="TreeGrafter"/>
</dbReference>
<dbReference type="GO" id="GO:0000036">
    <property type="term" value="F:acyl carrier activity"/>
    <property type="evidence" value="ECO:0007669"/>
    <property type="project" value="UniProtKB-UniRule"/>
</dbReference>
<dbReference type="GO" id="GO:0009245">
    <property type="term" value="P:lipid A biosynthetic process"/>
    <property type="evidence" value="ECO:0007669"/>
    <property type="project" value="TreeGrafter"/>
</dbReference>
<dbReference type="Gene3D" id="1.10.1200.10">
    <property type="entry name" value="ACP-like"/>
    <property type="match status" value="1"/>
</dbReference>
<dbReference type="HAMAP" id="MF_01217">
    <property type="entry name" value="Acyl_carrier"/>
    <property type="match status" value="1"/>
</dbReference>
<dbReference type="InterPro" id="IPR003231">
    <property type="entry name" value="ACP"/>
</dbReference>
<dbReference type="InterPro" id="IPR036736">
    <property type="entry name" value="ACP-like_sf"/>
</dbReference>
<dbReference type="InterPro" id="IPR009081">
    <property type="entry name" value="PP-bd_ACP"/>
</dbReference>
<dbReference type="InterPro" id="IPR006162">
    <property type="entry name" value="Ppantetheine_attach_site"/>
</dbReference>
<dbReference type="NCBIfam" id="TIGR00517">
    <property type="entry name" value="acyl_carrier"/>
    <property type="match status" value="1"/>
</dbReference>
<dbReference type="NCBIfam" id="NF002148">
    <property type="entry name" value="PRK00982.1-2"/>
    <property type="match status" value="1"/>
</dbReference>
<dbReference type="NCBIfam" id="NF002150">
    <property type="entry name" value="PRK00982.1-4"/>
    <property type="match status" value="1"/>
</dbReference>
<dbReference type="NCBIfam" id="NF002151">
    <property type="entry name" value="PRK00982.1-5"/>
    <property type="match status" value="1"/>
</dbReference>
<dbReference type="PANTHER" id="PTHR20863">
    <property type="entry name" value="ACYL CARRIER PROTEIN"/>
    <property type="match status" value="1"/>
</dbReference>
<dbReference type="PANTHER" id="PTHR20863:SF76">
    <property type="entry name" value="CARRIER DOMAIN-CONTAINING PROTEIN"/>
    <property type="match status" value="1"/>
</dbReference>
<dbReference type="Pfam" id="PF00550">
    <property type="entry name" value="PP-binding"/>
    <property type="match status" value="1"/>
</dbReference>
<dbReference type="SUPFAM" id="SSF47336">
    <property type="entry name" value="ACP-like"/>
    <property type="match status" value="1"/>
</dbReference>
<dbReference type="PROSITE" id="PS50075">
    <property type="entry name" value="CARRIER"/>
    <property type="match status" value="1"/>
</dbReference>
<dbReference type="PROSITE" id="PS00012">
    <property type="entry name" value="PHOSPHOPANTETHEINE"/>
    <property type="match status" value="1"/>
</dbReference>
<sequence length="76" mass="8640">MFDKLKEIIADKLSVNEDEITMESTFIDDLGADSLDIVELIMALEEELEMEIPDEDAEGFKTVGDVVEYITEHTEK</sequence>